<organism>
    <name type="scientific">Alcaligenes xylosoxydans xylosoxydans</name>
    <name type="common">Achromobacter xylosoxidans</name>
    <dbReference type="NCBI Taxonomy" id="85698"/>
    <lineage>
        <taxon>Bacteria</taxon>
        <taxon>Pseudomonadati</taxon>
        <taxon>Pseudomonadota</taxon>
        <taxon>Betaproteobacteria</taxon>
        <taxon>Burkholderiales</taxon>
        <taxon>Alcaligenaceae</taxon>
        <taxon>Achromobacter</taxon>
    </lineage>
</organism>
<feature type="chain" id="PRO_0000108369" description="Cytochrome c'">
    <location>
        <begin position="1"/>
        <end position="127"/>
    </location>
</feature>
<feature type="binding site" evidence="1 2 5 6 7">
    <location>
        <position position="12"/>
    </location>
    <ligand>
        <name>heme c</name>
        <dbReference type="ChEBI" id="CHEBI:61717"/>
    </ligand>
</feature>
<feature type="binding site" evidence="1 2 5 6 7">
    <location>
        <position position="13"/>
    </location>
    <ligand>
        <name>heme c</name>
        <dbReference type="ChEBI" id="CHEBI:61717"/>
    </ligand>
</feature>
<feature type="binding site" evidence="1 2 5 6 7">
    <location>
        <position position="67"/>
    </location>
    <ligand>
        <name>heme c</name>
        <dbReference type="ChEBI" id="CHEBI:61717"/>
    </ligand>
</feature>
<feature type="binding site" description="covalent" evidence="1 2 5 6 7">
    <location>
        <position position="116"/>
    </location>
    <ligand>
        <name>heme c</name>
        <dbReference type="ChEBI" id="CHEBI:61717"/>
    </ligand>
</feature>
<feature type="binding site" description="covalent" evidence="1 2 5 6 7">
    <location>
        <position position="119"/>
    </location>
    <ligand>
        <name>heme c</name>
        <dbReference type="ChEBI" id="CHEBI:61717"/>
    </ligand>
</feature>
<feature type="binding site" description="axial binding residue" evidence="1 2 5 6 7">
    <location>
        <position position="120"/>
    </location>
    <ligand>
        <name>heme c</name>
        <dbReference type="ChEBI" id="CHEBI:61717"/>
    </ligand>
    <ligandPart>
        <name>Fe</name>
        <dbReference type="ChEBI" id="CHEBI:18248"/>
    </ligandPart>
</feature>
<feature type="modified residue" description="Pyrrolidone carboxylic acid" evidence="1 4 7 8 10">
    <location>
        <position position="1"/>
    </location>
</feature>
<feature type="helix" evidence="12">
    <location>
        <begin position="5"/>
        <end position="24"/>
    </location>
</feature>
<feature type="helix" evidence="12">
    <location>
        <begin position="27"/>
        <end position="30"/>
    </location>
</feature>
<feature type="helix" evidence="12">
    <location>
        <begin position="38"/>
        <end position="52"/>
    </location>
</feature>
<feature type="helix" evidence="12">
    <location>
        <begin position="56"/>
        <end position="58"/>
    </location>
</feature>
<feature type="strand" evidence="11">
    <location>
        <begin position="66"/>
        <end position="68"/>
    </location>
</feature>
<feature type="helix" evidence="12">
    <location>
        <begin position="71"/>
        <end position="74"/>
    </location>
</feature>
<feature type="helix" evidence="12">
    <location>
        <begin position="76"/>
        <end position="99"/>
    </location>
</feature>
<feature type="helix" evidence="12">
    <location>
        <begin position="102"/>
        <end position="123"/>
    </location>
</feature>
<dbReference type="PIR" id="A00131">
    <property type="entry name" value="CCALC"/>
</dbReference>
<dbReference type="PDB" id="1CGN">
    <property type="method" value="X-ray"/>
    <property type="resolution" value="2.15 A"/>
    <property type="chains" value="A=2-127"/>
</dbReference>
<dbReference type="PDB" id="1CGO">
    <property type="method" value="X-ray"/>
    <property type="resolution" value="1.80 A"/>
    <property type="chains" value="A=2-127"/>
</dbReference>
<dbReference type="PDB" id="1E83">
    <property type="method" value="X-ray"/>
    <property type="resolution" value="2.05 A"/>
    <property type="chains" value="A=1-127"/>
</dbReference>
<dbReference type="PDB" id="1E84">
    <property type="method" value="X-ray"/>
    <property type="resolution" value="1.90 A"/>
    <property type="chains" value="A=1-127"/>
</dbReference>
<dbReference type="PDB" id="1E85">
    <property type="method" value="X-ray"/>
    <property type="resolution" value="1.35 A"/>
    <property type="chains" value="A=2-127"/>
</dbReference>
<dbReference type="PDB" id="1E86">
    <property type="method" value="X-ray"/>
    <property type="resolution" value="1.95 A"/>
    <property type="chains" value="A=1-127"/>
</dbReference>
<dbReference type="PDB" id="2XL6">
    <property type="method" value="X-ray"/>
    <property type="resolution" value="1.07 A"/>
    <property type="chains" value="A=2-127"/>
</dbReference>
<dbReference type="PDB" id="2XL8">
    <property type="method" value="X-ray"/>
    <property type="resolution" value="1.14 A"/>
    <property type="chains" value="A=2-127"/>
</dbReference>
<dbReference type="PDB" id="2XLD">
    <property type="method" value="X-ray"/>
    <property type="resolution" value="1.40 A"/>
    <property type="chains" value="A=2-127"/>
</dbReference>
<dbReference type="PDB" id="2XLE">
    <property type="method" value="X-ray"/>
    <property type="resolution" value="1.12 A"/>
    <property type="chains" value="A=2-127"/>
</dbReference>
<dbReference type="PDB" id="2XLH">
    <property type="method" value="X-ray"/>
    <property type="resolution" value="1.14 A"/>
    <property type="chains" value="A=2-127"/>
</dbReference>
<dbReference type="PDB" id="2XLM">
    <property type="method" value="X-ray"/>
    <property type="resolution" value="1.19 A"/>
    <property type="chains" value="A=2-127"/>
</dbReference>
<dbReference type="PDB" id="2XLO">
    <property type="method" value="X-ray"/>
    <property type="resolution" value="1.24 A"/>
    <property type="chains" value="A=2-127"/>
</dbReference>
<dbReference type="PDB" id="2XLV">
    <property type="method" value="X-ray"/>
    <property type="resolution" value="1.24 A"/>
    <property type="chains" value="A=2-127"/>
</dbReference>
<dbReference type="PDB" id="2XLW">
    <property type="method" value="X-ray"/>
    <property type="resolution" value="1.17 A"/>
    <property type="chains" value="A=2-123"/>
</dbReference>
<dbReference type="PDB" id="2XM0">
    <property type="method" value="X-ray"/>
    <property type="resolution" value="1.25 A"/>
    <property type="chains" value="A=2-127"/>
</dbReference>
<dbReference type="PDB" id="2XM4">
    <property type="method" value="X-ray"/>
    <property type="resolution" value="1.10 A"/>
    <property type="chains" value="A=2-127"/>
</dbReference>
<dbReference type="PDB" id="2YKZ">
    <property type="method" value="X-ray"/>
    <property type="resolution" value="0.84 A"/>
    <property type="chains" value="A=2-127"/>
</dbReference>
<dbReference type="PDB" id="2YL0">
    <property type="method" value="X-ray"/>
    <property type="resolution" value="0.95 A"/>
    <property type="chains" value="A=2-127"/>
</dbReference>
<dbReference type="PDB" id="2YL1">
    <property type="method" value="X-ray"/>
    <property type="resolution" value="1.03 A"/>
    <property type="chains" value="A=2-127"/>
</dbReference>
<dbReference type="PDB" id="2YL3">
    <property type="method" value="X-ray"/>
    <property type="resolution" value="1.04 A"/>
    <property type="chains" value="A=2-127"/>
</dbReference>
<dbReference type="PDB" id="2YL7">
    <property type="method" value="X-ray"/>
    <property type="resolution" value="0.90 A"/>
    <property type="chains" value="A=2-127"/>
</dbReference>
<dbReference type="PDB" id="2YLD">
    <property type="method" value="X-ray"/>
    <property type="resolution" value="1.25 A"/>
    <property type="chains" value="A=2-127"/>
</dbReference>
<dbReference type="PDB" id="2YLG">
    <property type="method" value="X-ray"/>
    <property type="resolution" value="1.05 A"/>
    <property type="chains" value="A=2-127"/>
</dbReference>
<dbReference type="PDB" id="2YLI">
    <property type="method" value="X-ray"/>
    <property type="resolution" value="1.45 A"/>
    <property type="chains" value="A=2-127"/>
</dbReference>
<dbReference type="PDB" id="3ZQV">
    <property type="method" value="X-ray"/>
    <property type="resolution" value="0.84 A"/>
    <property type="chains" value="A=2-127"/>
</dbReference>
<dbReference type="PDB" id="3ZQY">
    <property type="method" value="X-ray"/>
    <property type="resolution" value="1.03 A"/>
    <property type="chains" value="A=2-127"/>
</dbReference>
<dbReference type="PDB" id="3ZTM">
    <property type="method" value="X-ray"/>
    <property type="resolution" value="0.90 A"/>
    <property type="chains" value="A=2-127"/>
</dbReference>
<dbReference type="PDB" id="3ZTZ">
    <property type="method" value="X-ray"/>
    <property type="resolution" value="1.05 A"/>
    <property type="chains" value="A=2-127"/>
</dbReference>
<dbReference type="PDB" id="3ZWI">
    <property type="method" value="X-ray"/>
    <property type="resolution" value="1.25 A"/>
    <property type="chains" value="A=2-127"/>
</dbReference>
<dbReference type="PDB" id="4CDA">
    <property type="method" value="X-ray"/>
    <property type="resolution" value="1.30 A"/>
    <property type="chains" value="A=2-127"/>
</dbReference>
<dbReference type="PDB" id="4CDV">
    <property type="method" value="X-ray"/>
    <property type="resolution" value="1.17 A"/>
    <property type="chains" value="A=2-127"/>
</dbReference>
<dbReference type="PDB" id="4CDY">
    <property type="method" value="X-ray"/>
    <property type="resolution" value="1.77 A"/>
    <property type="chains" value="A=2-127"/>
</dbReference>
<dbReference type="PDB" id="4CIP">
    <property type="method" value="X-ray"/>
    <property type="resolution" value="1.22 A"/>
    <property type="chains" value="A=2-127"/>
</dbReference>
<dbReference type="PDB" id="4CJG">
    <property type="method" value="X-ray"/>
    <property type="resolution" value="1.26 A"/>
    <property type="chains" value="A=2-127"/>
</dbReference>
<dbReference type="PDB" id="4CJO">
    <property type="method" value="X-ray"/>
    <property type="resolution" value="1.55 A"/>
    <property type="chains" value="A=2-127"/>
</dbReference>
<dbReference type="PDB" id="4D4N">
    <property type="method" value="X-ray"/>
    <property type="resolution" value="1.45 A"/>
    <property type="chains" value="A=2-127"/>
</dbReference>
<dbReference type="PDB" id="4D4X">
    <property type="method" value="X-ray"/>
    <property type="resolution" value="1.30 A"/>
    <property type="chains" value="A=2-127"/>
</dbReference>
<dbReference type="PDB" id="4WGY">
    <property type="method" value="X-ray"/>
    <property type="resolution" value="1.48 A"/>
    <property type="chains" value="A=2-127"/>
</dbReference>
<dbReference type="PDB" id="4WGZ">
    <property type="method" value="X-ray"/>
    <property type="resolution" value="1.11 A"/>
    <property type="chains" value="A=2-127"/>
</dbReference>
<dbReference type="PDB" id="5AGF">
    <property type="method" value="X-ray"/>
    <property type="resolution" value="1.09 A"/>
    <property type="chains" value="A=2-127"/>
</dbReference>
<dbReference type="PDB" id="5JLI">
    <property type="method" value="X-ray"/>
    <property type="resolution" value="1.55 A"/>
    <property type="chains" value="A=2-127"/>
</dbReference>
<dbReference type="PDB" id="5JP7">
    <property type="method" value="X-ray"/>
    <property type="resolution" value="1.26 A"/>
    <property type="chains" value="A=2-126"/>
</dbReference>
<dbReference type="PDB" id="5JRA">
    <property type="method" value="X-ray"/>
    <property type="resolution" value="1.38 A"/>
    <property type="chains" value="A=2-126"/>
</dbReference>
<dbReference type="PDB" id="5JS5">
    <property type="method" value="X-ray"/>
    <property type="resolution" value="1.70 A"/>
    <property type="chains" value="A=2-125"/>
</dbReference>
<dbReference type="PDB" id="5JSL">
    <property type="method" value="X-ray"/>
    <property type="resolution" value="1.25 A"/>
    <property type="chains" value="A=2-126"/>
</dbReference>
<dbReference type="PDB" id="5JT4">
    <property type="method" value="X-ray"/>
    <property type="resolution" value="1.25 A"/>
    <property type="chains" value="A=2-125"/>
</dbReference>
<dbReference type="PDB" id="5JUA">
    <property type="method" value="X-ray"/>
    <property type="resolution" value="1.13 A"/>
    <property type="chains" value="A=1-126"/>
</dbReference>
<dbReference type="PDB" id="5JVE">
    <property type="method" value="X-ray"/>
    <property type="resolution" value="1.12 A"/>
    <property type="chains" value="A=2-125"/>
</dbReference>
<dbReference type="PDB" id="5NC0">
    <property type="method" value="X-ray"/>
    <property type="resolution" value="0.91 A"/>
    <property type="chains" value="A=1-127"/>
</dbReference>
<dbReference type="PDB" id="5NGX">
    <property type="method" value="X-ray"/>
    <property type="resolution" value="1.06 A"/>
    <property type="chains" value="A=1-126"/>
</dbReference>
<dbReference type="PDBsum" id="1CGN"/>
<dbReference type="PDBsum" id="1CGO"/>
<dbReference type="PDBsum" id="1E83"/>
<dbReference type="PDBsum" id="1E84"/>
<dbReference type="PDBsum" id="1E85"/>
<dbReference type="PDBsum" id="1E86"/>
<dbReference type="PDBsum" id="2XL6"/>
<dbReference type="PDBsum" id="2XL8"/>
<dbReference type="PDBsum" id="2XLD"/>
<dbReference type="PDBsum" id="2XLE"/>
<dbReference type="PDBsum" id="2XLH"/>
<dbReference type="PDBsum" id="2XLM"/>
<dbReference type="PDBsum" id="2XLO"/>
<dbReference type="PDBsum" id="2XLV"/>
<dbReference type="PDBsum" id="2XLW"/>
<dbReference type="PDBsum" id="2XM0"/>
<dbReference type="PDBsum" id="2XM4"/>
<dbReference type="PDBsum" id="2YKZ"/>
<dbReference type="PDBsum" id="2YL0"/>
<dbReference type="PDBsum" id="2YL1"/>
<dbReference type="PDBsum" id="2YL3"/>
<dbReference type="PDBsum" id="2YL7"/>
<dbReference type="PDBsum" id="2YLD"/>
<dbReference type="PDBsum" id="2YLG"/>
<dbReference type="PDBsum" id="2YLI"/>
<dbReference type="PDBsum" id="3ZQV"/>
<dbReference type="PDBsum" id="3ZQY"/>
<dbReference type="PDBsum" id="3ZTM"/>
<dbReference type="PDBsum" id="3ZTZ"/>
<dbReference type="PDBsum" id="3ZWI"/>
<dbReference type="PDBsum" id="4CDA"/>
<dbReference type="PDBsum" id="4CDV"/>
<dbReference type="PDBsum" id="4CDY"/>
<dbReference type="PDBsum" id="4CIP"/>
<dbReference type="PDBsum" id="4CJG"/>
<dbReference type="PDBsum" id="4CJO"/>
<dbReference type="PDBsum" id="4D4N"/>
<dbReference type="PDBsum" id="4D4X"/>
<dbReference type="PDBsum" id="4WGY"/>
<dbReference type="PDBsum" id="4WGZ"/>
<dbReference type="PDBsum" id="5AGF"/>
<dbReference type="PDBsum" id="5JLI"/>
<dbReference type="PDBsum" id="5JP7"/>
<dbReference type="PDBsum" id="5JRA"/>
<dbReference type="PDBsum" id="5JS5"/>
<dbReference type="PDBsum" id="5JSL"/>
<dbReference type="PDBsum" id="5JT4"/>
<dbReference type="PDBsum" id="5JUA"/>
<dbReference type="PDBsum" id="5JVE"/>
<dbReference type="PDBsum" id="5NC0"/>
<dbReference type="PDBsum" id="5NGX"/>
<dbReference type="SASBDB" id="P00138"/>
<dbReference type="SMR" id="P00138"/>
<dbReference type="DrugBank" id="DB03088">
    <property type="generic name" value="Pidolic acid"/>
</dbReference>
<dbReference type="eggNOG" id="COG3909">
    <property type="taxonomic scope" value="Bacteria"/>
</dbReference>
<dbReference type="EvolutionaryTrace" id="P00138"/>
<dbReference type="GO" id="GO:0042597">
    <property type="term" value="C:periplasmic space"/>
    <property type="evidence" value="ECO:0007669"/>
    <property type="project" value="UniProtKB-SubCell"/>
</dbReference>
<dbReference type="GO" id="GO:0009055">
    <property type="term" value="F:electron transfer activity"/>
    <property type="evidence" value="ECO:0007669"/>
    <property type="project" value="InterPro"/>
</dbReference>
<dbReference type="GO" id="GO:0020037">
    <property type="term" value="F:heme binding"/>
    <property type="evidence" value="ECO:0007669"/>
    <property type="project" value="InterPro"/>
</dbReference>
<dbReference type="GO" id="GO:0005506">
    <property type="term" value="F:iron ion binding"/>
    <property type="evidence" value="ECO:0007669"/>
    <property type="project" value="InterPro"/>
</dbReference>
<dbReference type="GO" id="GO:0022900">
    <property type="term" value="P:electron transport chain"/>
    <property type="evidence" value="ECO:0007669"/>
    <property type="project" value="InterPro"/>
</dbReference>
<dbReference type="Gene3D" id="1.20.120.10">
    <property type="entry name" value="Cytochrome c/b562"/>
    <property type="match status" value="1"/>
</dbReference>
<dbReference type="InterPro" id="IPR010980">
    <property type="entry name" value="Cyt_c/b562"/>
</dbReference>
<dbReference type="InterPro" id="IPR002321">
    <property type="entry name" value="Cyt_c_II"/>
</dbReference>
<dbReference type="InterPro" id="IPR012127">
    <property type="entry name" value="Cyt_c_prime"/>
</dbReference>
<dbReference type="InterPro" id="IPR015984">
    <property type="entry name" value="Cyt_c_prime_subgr"/>
</dbReference>
<dbReference type="Pfam" id="PF01322">
    <property type="entry name" value="Cytochrom_C_2"/>
    <property type="match status" value="1"/>
</dbReference>
<dbReference type="PIRSF" id="PIRSF000027">
    <property type="entry name" value="Cytc_c_prime"/>
    <property type="match status" value="1"/>
</dbReference>
<dbReference type="PRINTS" id="PR00608">
    <property type="entry name" value="CYTCHROMECII"/>
</dbReference>
<dbReference type="SUPFAM" id="SSF47175">
    <property type="entry name" value="Cytochromes"/>
    <property type="match status" value="1"/>
</dbReference>
<dbReference type="PROSITE" id="PS51009">
    <property type="entry name" value="CYTCII"/>
    <property type="match status" value="1"/>
</dbReference>
<reference key="1">
    <citation type="journal article" date="1973" name="Biochem. J.">
        <title>The amino acid sequence of cytochrome c' from Alcaligenes sp. N.C.I.B. 11015.</title>
        <authorList>
            <person name="Ambler R.P."/>
        </authorList>
    </citation>
    <scope>PROTEIN SEQUENCE</scope>
    <scope>PYROGLUTAMATE FORMATION AT GLN-1</scope>
    <source>
        <strain>LMG 1865 / CCUG 61957 / NCIMB 11015 / Iwasaki</strain>
    </source>
</reference>
<reference evidence="5 6" key="2">
    <citation type="journal article" date="1996" name="Acta Crystallogr. D">
        <title>Three-dimensional structure of cytochrome c' from two Alcaligenes species and the implications for four-helix bundle structures.</title>
        <authorList>
            <person name="Dobbs A.J."/>
            <person name="Anderson B.F."/>
            <person name="Faber H.R."/>
            <person name="Baker E.N."/>
        </authorList>
    </citation>
    <scope>X-RAY CRYSTALLOGRAPHY (1.80 ANGSTROMS) IN COMPLEXES WITH HEME C</scope>
    <source>
        <strain>LMG 1865 / CCUG 61957 / NCIMB 11015 / Iwasaki</strain>
    </source>
</reference>
<reference evidence="7 8 9 10" key="3">
    <citation type="journal article" date="2000" name="EMBO J.">
        <title>Unprecedented proximal binding of nitric oxide to heme: implications for guanylate cyclase.</title>
        <authorList>
            <person name="Lawson D.M."/>
            <person name="Stevenson C.E.M."/>
            <person name="Andrew C.R."/>
            <person name="Eady R.R."/>
        </authorList>
    </citation>
    <scope>X-RAY CRYSTALLOGRAPHY (1.35 ANGSTROMS) IN COMPLEXES WITH HEME C; NO AND CO</scope>
    <scope>PYROGLUTAMATE FORMATION AT GLN-1</scope>
    <source>
        <strain>LMG 1865 / CCUG 61957 / NCIMB 11015 / Iwasaki</strain>
    </source>
</reference>
<reference key="4">
    <citation type="journal article" date="2001" name="Biochemistry">
        <title>Resonance Raman studies of cytochrome c' support the binding of NO and CO to opposite sides of the heme: implications for ligand discrimination in heme-based sensors.</title>
        <authorList>
            <person name="Andrew C.R."/>
            <person name="Green E.L."/>
            <person name="Lawson D.M."/>
            <person name="Eady R.R."/>
        </authorList>
    </citation>
    <scope>RESONANCE RAMAN SPECTROSCOPY</scope>
    <source>
        <strain>LMG 1865 / CCUG 61957 / NCIMB 11015 / Iwasaki</strain>
    </source>
</reference>
<proteinExistence type="evidence at protein level"/>
<evidence type="ECO:0000269" key="1">
    <source>
    </source>
</evidence>
<evidence type="ECO:0000269" key="2">
    <source>
    </source>
</evidence>
<evidence type="ECO:0000269" key="3">
    <source>
    </source>
</evidence>
<evidence type="ECO:0000269" key="4">
    <source>
    </source>
</evidence>
<evidence type="ECO:0007744" key="5">
    <source>
        <dbReference type="PDB" id="1CGN"/>
    </source>
</evidence>
<evidence type="ECO:0007744" key="6">
    <source>
        <dbReference type="PDB" id="1CGO"/>
    </source>
</evidence>
<evidence type="ECO:0007744" key="7">
    <source>
        <dbReference type="PDB" id="1E83"/>
    </source>
</evidence>
<evidence type="ECO:0007744" key="8">
    <source>
        <dbReference type="PDB" id="1E84"/>
    </source>
</evidence>
<evidence type="ECO:0007744" key="9">
    <source>
        <dbReference type="PDB" id="1E85"/>
    </source>
</evidence>
<evidence type="ECO:0007744" key="10">
    <source>
        <dbReference type="PDB" id="1E86"/>
    </source>
</evidence>
<evidence type="ECO:0007829" key="11">
    <source>
        <dbReference type="PDB" id="2XL6"/>
    </source>
</evidence>
<evidence type="ECO:0007829" key="12">
    <source>
        <dbReference type="PDB" id="2YKZ"/>
    </source>
</evidence>
<accession>P00138</accession>
<name>CYCP_ALCXX</name>
<keyword id="KW-0002">3D-structure</keyword>
<keyword id="KW-0903">Direct protein sequencing</keyword>
<keyword id="KW-0249">Electron transport</keyword>
<keyword id="KW-0349">Heme</keyword>
<keyword id="KW-0408">Iron</keyword>
<keyword id="KW-0479">Metal-binding</keyword>
<keyword id="KW-0574">Periplasm</keyword>
<keyword id="KW-0873">Pyrrolidone carboxylic acid</keyword>
<keyword id="KW-0813">Transport</keyword>
<protein>
    <recommendedName>
        <fullName>Cytochrome c'</fullName>
    </recommendedName>
</protein>
<sequence>QFAKPEDAVKYRQSALTLMASHFGRMTPVVKGQAPYDAAQIKANVEVLKTLSALPWAAFGPGTEGGDARPEIWSDAASFKQKQQAFQDNIVKLSAAADAGDLDKLRAAFGDVGASCKACHDAYRKKK</sequence>
<comment type="function">
    <text>Cytochrome c' is the most widely occurring bacterial c-type cytochrome. Cytochromes c' are high-spin proteins and the heme has no sixth ligand. Their exact function is not known.</text>
</comment>
<comment type="subunit">
    <text>Homodimer.</text>
</comment>
<comment type="subcellular location">
    <subcellularLocation>
        <location>Periplasm</location>
    </subcellularLocation>
</comment>
<comment type="PTM">
    <text evidence="1 3">Binds 1 heme c group covalently per subunit.</text>
</comment>